<organism>
    <name type="scientific">Xanthomonas campestris pv. campestris (strain 8004)</name>
    <dbReference type="NCBI Taxonomy" id="314565"/>
    <lineage>
        <taxon>Bacteria</taxon>
        <taxon>Pseudomonadati</taxon>
        <taxon>Pseudomonadota</taxon>
        <taxon>Gammaproteobacteria</taxon>
        <taxon>Lysobacterales</taxon>
        <taxon>Lysobacteraceae</taxon>
        <taxon>Xanthomonas</taxon>
    </lineage>
</organism>
<gene>
    <name evidence="1" type="primary">ligA</name>
    <name type="ordered locus">XC_2664</name>
</gene>
<feature type="chain" id="PRO_0000313516" description="DNA ligase">
    <location>
        <begin position="1"/>
        <end position="833"/>
    </location>
</feature>
<feature type="domain" description="BRCT" evidence="1">
    <location>
        <begin position="750"/>
        <end position="833"/>
    </location>
</feature>
<feature type="active site" description="N6-AMP-lysine intermediate" evidence="1">
    <location>
        <position position="117"/>
    </location>
</feature>
<feature type="binding site" evidence="1">
    <location>
        <begin position="35"/>
        <end position="39"/>
    </location>
    <ligand>
        <name>NAD(+)</name>
        <dbReference type="ChEBI" id="CHEBI:57540"/>
    </ligand>
</feature>
<feature type="binding site" evidence="1">
    <location>
        <begin position="84"/>
        <end position="85"/>
    </location>
    <ligand>
        <name>NAD(+)</name>
        <dbReference type="ChEBI" id="CHEBI:57540"/>
    </ligand>
</feature>
<feature type="binding site" evidence="1">
    <location>
        <position position="115"/>
    </location>
    <ligand>
        <name>NAD(+)</name>
        <dbReference type="ChEBI" id="CHEBI:57540"/>
    </ligand>
</feature>
<feature type="binding site" evidence="1">
    <location>
        <position position="138"/>
    </location>
    <ligand>
        <name>NAD(+)</name>
        <dbReference type="ChEBI" id="CHEBI:57540"/>
    </ligand>
</feature>
<feature type="binding site" evidence="1">
    <location>
        <position position="175"/>
    </location>
    <ligand>
        <name>NAD(+)</name>
        <dbReference type="ChEBI" id="CHEBI:57540"/>
    </ligand>
</feature>
<feature type="binding site" evidence="1">
    <location>
        <position position="292"/>
    </location>
    <ligand>
        <name>NAD(+)</name>
        <dbReference type="ChEBI" id="CHEBI:57540"/>
    </ligand>
</feature>
<feature type="binding site" evidence="1">
    <location>
        <position position="316"/>
    </location>
    <ligand>
        <name>NAD(+)</name>
        <dbReference type="ChEBI" id="CHEBI:57540"/>
    </ligand>
</feature>
<feature type="binding site" evidence="1">
    <location>
        <position position="410"/>
    </location>
    <ligand>
        <name>Zn(2+)</name>
        <dbReference type="ChEBI" id="CHEBI:29105"/>
    </ligand>
</feature>
<feature type="binding site" evidence="1">
    <location>
        <position position="413"/>
    </location>
    <ligand>
        <name>Zn(2+)</name>
        <dbReference type="ChEBI" id="CHEBI:29105"/>
    </ligand>
</feature>
<feature type="binding site" evidence="1">
    <location>
        <position position="428"/>
    </location>
    <ligand>
        <name>Zn(2+)</name>
        <dbReference type="ChEBI" id="CHEBI:29105"/>
    </ligand>
</feature>
<feature type="binding site" evidence="1">
    <location>
        <position position="434"/>
    </location>
    <ligand>
        <name>Zn(2+)</name>
        <dbReference type="ChEBI" id="CHEBI:29105"/>
    </ligand>
</feature>
<comment type="function">
    <text evidence="1">DNA ligase that catalyzes the formation of phosphodiester linkages between 5'-phosphoryl and 3'-hydroxyl groups in double-stranded DNA using NAD as a coenzyme and as the energy source for the reaction. It is essential for DNA replication and repair of damaged DNA.</text>
</comment>
<comment type="catalytic activity">
    <reaction evidence="1">
        <text>NAD(+) + (deoxyribonucleotide)n-3'-hydroxyl + 5'-phospho-(deoxyribonucleotide)m = (deoxyribonucleotide)n+m + AMP + beta-nicotinamide D-nucleotide.</text>
        <dbReference type="EC" id="6.5.1.2"/>
    </reaction>
</comment>
<comment type="cofactor">
    <cofactor evidence="1">
        <name>Mg(2+)</name>
        <dbReference type="ChEBI" id="CHEBI:18420"/>
    </cofactor>
    <cofactor evidence="1">
        <name>Mn(2+)</name>
        <dbReference type="ChEBI" id="CHEBI:29035"/>
    </cofactor>
</comment>
<comment type="similarity">
    <text evidence="1">Belongs to the NAD-dependent DNA ligase family. LigA subfamily.</text>
</comment>
<protein>
    <recommendedName>
        <fullName evidence="1">DNA ligase</fullName>
        <ecNumber evidence="1">6.5.1.2</ecNumber>
    </recommendedName>
    <alternativeName>
        <fullName evidence="1">Polydeoxyribonucleotide synthase [NAD(+)]</fullName>
    </alternativeName>
</protein>
<name>DNLJ_XANC8</name>
<sequence>MTASPDPAQRIDALRQRIEDANYRYHVLDEPQIADVEYDRLLRELEALEAAHPELATADSPTQRVGYLAASRFAEVRHVLPMLSLGNAFSDEEVAEFVRRISERLERKQPVFCAEPKLDGLAISLRYEQGEFVQGATRGDGATGEDVSANLRTVKAIPLRLRGTGWPEVLEVRGEVYMPRAAFEAYNAQMRLQGGKVLANPRNGAAGSLRQLDARITAQRPLSFFAYGVGEVADGALPPTHSTMLAQLREWGFPVSQLVEVVQGSEGLLTYYRRIGEARDGLPFDIDGVVYKLDDLAGQREMGFVSRAPRWALAHKFPAQEQSTTVEAIEIQIGRTGAATPVARLKPVHVAGVVVTNATLHNADQIARLDVRVGDTVIVRRAGDVIPEVAGVVAEQRPAGTHAWQMPTQCPVCGSEIVREEGQAVWRCSGELTCPAQRKEAFRHFVSRRAMDVDGLGEKFIEVLVDSGVVQGVADLYLLNVDQLLQLRLISTADSPHAFLREAREHLAAGAYAQVEQTMVGIGVDLAGVQPAPQTWQADLLRAGLPAFDWNRKKIATKWAENLIEAIETSRDTTLERFLFALGIEHVGESTAKALSAWFGELDVIRHLPWPLFKRVPDIGGEVARSLGHFFDQAGNQQAIDDLLQRGVRIGDAHPPSPKLRGALSFAVLLEDLDIPKVTPVRAQQLAAATASFDALIASEADPLLQAGVPAPVIASLQQWLARPENAALATAAQRAMDALLAQLPQADAVQAGPLDGQTVVITGTLAALTRDAAKQRLESLGAKVAGSVSKKTAFLVAGEEAGSKLDKAQSLGVEIWDEARLLAFLSEHGQAV</sequence>
<proteinExistence type="inferred from homology"/>
<reference key="1">
    <citation type="journal article" date="2005" name="Genome Res.">
        <title>Comparative and functional genomic analyses of the pathogenicity of phytopathogen Xanthomonas campestris pv. campestris.</title>
        <authorList>
            <person name="Qian W."/>
            <person name="Jia Y."/>
            <person name="Ren S.-X."/>
            <person name="He Y.-Q."/>
            <person name="Feng J.-X."/>
            <person name="Lu L.-F."/>
            <person name="Sun Q."/>
            <person name="Ying G."/>
            <person name="Tang D.-J."/>
            <person name="Tang H."/>
            <person name="Wu W."/>
            <person name="Hao P."/>
            <person name="Wang L."/>
            <person name="Jiang B.-L."/>
            <person name="Zeng S."/>
            <person name="Gu W.-Y."/>
            <person name="Lu G."/>
            <person name="Rong L."/>
            <person name="Tian Y."/>
            <person name="Yao Z."/>
            <person name="Fu G."/>
            <person name="Chen B."/>
            <person name="Fang R."/>
            <person name="Qiang B."/>
            <person name="Chen Z."/>
            <person name="Zhao G.-P."/>
            <person name="Tang J.-L."/>
            <person name="He C."/>
        </authorList>
    </citation>
    <scope>NUCLEOTIDE SEQUENCE [LARGE SCALE GENOMIC DNA]</scope>
    <source>
        <strain>8004</strain>
    </source>
</reference>
<dbReference type="EC" id="6.5.1.2" evidence="1"/>
<dbReference type="EMBL" id="CP000050">
    <property type="protein sequence ID" value="AAY49713.1"/>
    <property type="molecule type" value="Genomic_DNA"/>
</dbReference>
<dbReference type="RefSeq" id="WP_011036752.1">
    <property type="nucleotide sequence ID" value="NZ_CP155948.1"/>
</dbReference>
<dbReference type="SMR" id="Q4UTB0"/>
<dbReference type="KEGG" id="xcb:XC_2664"/>
<dbReference type="HOGENOM" id="CLU_007764_2_1_6"/>
<dbReference type="Proteomes" id="UP000000420">
    <property type="component" value="Chromosome"/>
</dbReference>
<dbReference type="GO" id="GO:0005829">
    <property type="term" value="C:cytosol"/>
    <property type="evidence" value="ECO:0007669"/>
    <property type="project" value="TreeGrafter"/>
</dbReference>
<dbReference type="GO" id="GO:0003911">
    <property type="term" value="F:DNA ligase (NAD+) activity"/>
    <property type="evidence" value="ECO:0007669"/>
    <property type="project" value="UniProtKB-UniRule"/>
</dbReference>
<dbReference type="GO" id="GO:0046872">
    <property type="term" value="F:metal ion binding"/>
    <property type="evidence" value="ECO:0007669"/>
    <property type="project" value="UniProtKB-KW"/>
</dbReference>
<dbReference type="GO" id="GO:0006281">
    <property type="term" value="P:DNA repair"/>
    <property type="evidence" value="ECO:0007669"/>
    <property type="project" value="UniProtKB-KW"/>
</dbReference>
<dbReference type="GO" id="GO:0006260">
    <property type="term" value="P:DNA replication"/>
    <property type="evidence" value="ECO:0007669"/>
    <property type="project" value="UniProtKB-KW"/>
</dbReference>
<dbReference type="CDD" id="cd17748">
    <property type="entry name" value="BRCT_DNA_ligase_like"/>
    <property type="match status" value="1"/>
</dbReference>
<dbReference type="CDD" id="cd00114">
    <property type="entry name" value="LIGANc"/>
    <property type="match status" value="1"/>
</dbReference>
<dbReference type="FunFam" id="1.10.150.20:FF:000006">
    <property type="entry name" value="DNA ligase"/>
    <property type="match status" value="1"/>
</dbReference>
<dbReference type="FunFam" id="1.10.287.610:FF:000002">
    <property type="entry name" value="DNA ligase"/>
    <property type="match status" value="1"/>
</dbReference>
<dbReference type="FunFam" id="2.40.50.140:FF:000012">
    <property type="entry name" value="DNA ligase"/>
    <property type="match status" value="1"/>
</dbReference>
<dbReference type="FunFam" id="3.30.470.30:FF:000001">
    <property type="entry name" value="DNA ligase"/>
    <property type="match status" value="1"/>
</dbReference>
<dbReference type="FunFam" id="3.40.50.10190:FF:000054">
    <property type="entry name" value="DNA ligase"/>
    <property type="match status" value="1"/>
</dbReference>
<dbReference type="Gene3D" id="6.20.10.30">
    <property type="match status" value="1"/>
</dbReference>
<dbReference type="Gene3D" id="1.10.150.20">
    <property type="entry name" value="5' to 3' exonuclease, C-terminal subdomain"/>
    <property type="match status" value="2"/>
</dbReference>
<dbReference type="Gene3D" id="3.40.50.10190">
    <property type="entry name" value="BRCT domain"/>
    <property type="match status" value="1"/>
</dbReference>
<dbReference type="Gene3D" id="3.30.470.30">
    <property type="entry name" value="DNA ligase/mRNA capping enzyme"/>
    <property type="match status" value="1"/>
</dbReference>
<dbReference type="Gene3D" id="1.10.287.610">
    <property type="entry name" value="Helix hairpin bin"/>
    <property type="match status" value="1"/>
</dbReference>
<dbReference type="Gene3D" id="2.40.50.140">
    <property type="entry name" value="Nucleic acid-binding proteins"/>
    <property type="match status" value="1"/>
</dbReference>
<dbReference type="HAMAP" id="MF_01588">
    <property type="entry name" value="DNA_ligase_A"/>
    <property type="match status" value="1"/>
</dbReference>
<dbReference type="InterPro" id="IPR001357">
    <property type="entry name" value="BRCT_dom"/>
</dbReference>
<dbReference type="InterPro" id="IPR036420">
    <property type="entry name" value="BRCT_dom_sf"/>
</dbReference>
<dbReference type="InterPro" id="IPR041663">
    <property type="entry name" value="DisA/LigA_HHH"/>
</dbReference>
<dbReference type="InterPro" id="IPR001679">
    <property type="entry name" value="DNA_ligase"/>
</dbReference>
<dbReference type="InterPro" id="IPR018239">
    <property type="entry name" value="DNA_ligase_AS"/>
</dbReference>
<dbReference type="InterPro" id="IPR013839">
    <property type="entry name" value="DNAligase_adenylation"/>
</dbReference>
<dbReference type="InterPro" id="IPR013840">
    <property type="entry name" value="DNAligase_N"/>
</dbReference>
<dbReference type="InterPro" id="IPR012340">
    <property type="entry name" value="NA-bd_OB-fold"/>
</dbReference>
<dbReference type="InterPro" id="IPR004150">
    <property type="entry name" value="NAD_DNA_ligase_OB"/>
</dbReference>
<dbReference type="InterPro" id="IPR010994">
    <property type="entry name" value="RuvA_2-like"/>
</dbReference>
<dbReference type="InterPro" id="IPR004149">
    <property type="entry name" value="Znf_DNAligase_C4"/>
</dbReference>
<dbReference type="NCBIfam" id="TIGR00575">
    <property type="entry name" value="dnlj"/>
    <property type="match status" value="1"/>
</dbReference>
<dbReference type="NCBIfam" id="NF005932">
    <property type="entry name" value="PRK07956.1"/>
    <property type="match status" value="1"/>
</dbReference>
<dbReference type="PANTHER" id="PTHR23389">
    <property type="entry name" value="CHROMOSOME TRANSMISSION FIDELITY FACTOR 18"/>
    <property type="match status" value="1"/>
</dbReference>
<dbReference type="PANTHER" id="PTHR23389:SF9">
    <property type="entry name" value="DNA LIGASE"/>
    <property type="match status" value="1"/>
</dbReference>
<dbReference type="Pfam" id="PF00533">
    <property type="entry name" value="BRCT"/>
    <property type="match status" value="1"/>
</dbReference>
<dbReference type="Pfam" id="PF01653">
    <property type="entry name" value="DNA_ligase_aden"/>
    <property type="match status" value="1"/>
</dbReference>
<dbReference type="Pfam" id="PF03120">
    <property type="entry name" value="DNA_ligase_OB"/>
    <property type="match status" value="1"/>
</dbReference>
<dbReference type="Pfam" id="PF03119">
    <property type="entry name" value="DNA_ligase_ZBD"/>
    <property type="match status" value="1"/>
</dbReference>
<dbReference type="Pfam" id="PF12826">
    <property type="entry name" value="HHH_2"/>
    <property type="match status" value="1"/>
</dbReference>
<dbReference type="Pfam" id="PF22745">
    <property type="entry name" value="Nlig-Ia"/>
    <property type="match status" value="1"/>
</dbReference>
<dbReference type="PIRSF" id="PIRSF001604">
    <property type="entry name" value="LigA"/>
    <property type="match status" value="1"/>
</dbReference>
<dbReference type="SMART" id="SM00292">
    <property type="entry name" value="BRCT"/>
    <property type="match status" value="1"/>
</dbReference>
<dbReference type="SMART" id="SM00532">
    <property type="entry name" value="LIGANc"/>
    <property type="match status" value="1"/>
</dbReference>
<dbReference type="SUPFAM" id="SSF52113">
    <property type="entry name" value="BRCT domain"/>
    <property type="match status" value="1"/>
</dbReference>
<dbReference type="SUPFAM" id="SSF56091">
    <property type="entry name" value="DNA ligase/mRNA capping enzyme, catalytic domain"/>
    <property type="match status" value="1"/>
</dbReference>
<dbReference type="SUPFAM" id="SSF50249">
    <property type="entry name" value="Nucleic acid-binding proteins"/>
    <property type="match status" value="1"/>
</dbReference>
<dbReference type="SUPFAM" id="SSF47781">
    <property type="entry name" value="RuvA domain 2-like"/>
    <property type="match status" value="2"/>
</dbReference>
<dbReference type="PROSITE" id="PS50172">
    <property type="entry name" value="BRCT"/>
    <property type="match status" value="1"/>
</dbReference>
<dbReference type="PROSITE" id="PS01055">
    <property type="entry name" value="DNA_LIGASE_N1"/>
    <property type="match status" value="1"/>
</dbReference>
<keyword id="KW-0227">DNA damage</keyword>
<keyword id="KW-0234">DNA repair</keyword>
<keyword id="KW-0235">DNA replication</keyword>
<keyword id="KW-0436">Ligase</keyword>
<keyword id="KW-0460">Magnesium</keyword>
<keyword id="KW-0464">Manganese</keyword>
<keyword id="KW-0479">Metal-binding</keyword>
<keyword id="KW-0520">NAD</keyword>
<keyword id="KW-0862">Zinc</keyword>
<accession>Q4UTB0</accession>
<evidence type="ECO:0000255" key="1">
    <source>
        <dbReference type="HAMAP-Rule" id="MF_01588"/>
    </source>
</evidence>